<proteinExistence type="evidence at protein level"/>
<keyword id="KW-0903">Direct protein sequencing</keyword>
<keyword id="KW-0456">Lyase</keyword>
<keyword id="KW-0479">Metal-binding</keyword>
<keyword id="KW-0964">Secreted</keyword>
<keyword id="KW-0732">Signal</keyword>
<keyword id="KW-0862">Zinc</keyword>
<organism>
    <name type="scientific">Lottia gigantea</name>
    <name type="common">Giant owl limpet</name>
    <dbReference type="NCBI Taxonomy" id="225164"/>
    <lineage>
        <taxon>Eukaryota</taxon>
        <taxon>Metazoa</taxon>
        <taxon>Spiralia</taxon>
        <taxon>Lophotrochozoa</taxon>
        <taxon>Mollusca</taxon>
        <taxon>Gastropoda</taxon>
        <taxon>Patellogastropoda</taxon>
        <taxon>Lottioidea</taxon>
        <taxon>Lottiidae</taxon>
        <taxon>Lottia</taxon>
    </lineage>
</organism>
<name>CAH1_LOTGI</name>
<accession>B3A0P2</accession>
<protein>
    <recommendedName>
        <fullName>Putative carbonic anhydrase 1</fullName>
        <ecNumber evidence="1">4.2.1.1</ecNumber>
    </recommendedName>
    <alternativeName>
        <fullName>Putative carbonate dehydratase 1</fullName>
    </alternativeName>
</protein>
<comment type="function">
    <text evidence="1">Reversible hydration of carbon dioxide.</text>
</comment>
<comment type="catalytic activity">
    <reaction evidence="1">
        <text>hydrogencarbonate + H(+) = CO2 + H2O</text>
        <dbReference type="Rhea" id="RHEA:10748"/>
        <dbReference type="ChEBI" id="CHEBI:15377"/>
        <dbReference type="ChEBI" id="CHEBI:15378"/>
        <dbReference type="ChEBI" id="CHEBI:16526"/>
        <dbReference type="ChEBI" id="CHEBI:17544"/>
        <dbReference type="EC" id="4.2.1.1"/>
    </reaction>
</comment>
<comment type="cofactor">
    <cofactor evidence="1">
        <name>Zn(2+)</name>
        <dbReference type="ChEBI" id="CHEBI:29105"/>
    </cofactor>
</comment>
<comment type="subcellular location">
    <subcellularLocation>
        <location evidence="4">Secreted</location>
    </subcellularLocation>
</comment>
<comment type="tissue specificity">
    <text evidence="4">Component of the acid-insoluble and acid-soluble organic matrix of calcified layers of the shell (at protein level).</text>
</comment>
<comment type="similarity">
    <text evidence="2">Belongs to the alpha-carbonic anhydrase family.</text>
</comment>
<sequence length="395" mass="44718">MKLQGAGCVVAAVLGALFIVNVESHFHKPELQLCKAFGEPCISYDVRSTIGPRCWFKLEFPREKCCNENGKRQSPIDIPDVKSIYKVPQKLRYSSRKFVGHLENTGIQPAFKRKVGADKVYLEGIGSPVGKRYFIENVHFHVGVRHKERQTENTLNGRSFDGEAHIVHIREDFGDLKEAANHPQGLLVISIFLSTSKGERRRDGFDDLIEMIQDVQEFEEEDGPCANVKIPDIFKFKQLIPFHPVWPICKKTFPVADDSDNSGSGVVCNFYLPNGLCGEKKESKINPNELLADDPEYYVFNGGLTTPPCSESVLWLVAKQPRKVSVFYPYVVRNMETQREGEIIGDFGNLRPLQDLNDRPVFLVRFRLKRNWEHGDTAANDNDAMDSPFSVLGIN</sequence>
<feature type="signal peptide" evidence="2">
    <location>
        <begin position="1"/>
        <end position="24"/>
    </location>
</feature>
<feature type="chain" id="PRO_0000415261" description="Putative carbonic anhydrase 1">
    <location>
        <begin position="25"/>
        <end position="395"/>
    </location>
</feature>
<feature type="domain" description="Alpha-carbonic anhydrase" evidence="3">
    <location>
        <begin position="42"/>
        <end position="365"/>
    </location>
</feature>
<feature type="binding site" evidence="1">
    <location>
        <position position="139"/>
    </location>
    <ligand>
        <name>Zn(2+)</name>
        <dbReference type="ChEBI" id="CHEBI:29105"/>
        <note>catalytic</note>
    </ligand>
</feature>
<feature type="binding site" evidence="1">
    <location>
        <position position="141"/>
    </location>
    <ligand>
        <name>Zn(2+)</name>
        <dbReference type="ChEBI" id="CHEBI:29105"/>
        <note>catalytic</note>
    </ligand>
</feature>
<feature type="binding site" evidence="1">
    <location>
        <position position="165"/>
    </location>
    <ligand>
        <name>Zn(2+)</name>
        <dbReference type="ChEBI" id="CHEBI:29105"/>
        <note>catalytic</note>
    </ligand>
</feature>
<feature type="sequence conflict" description="In Ref. 1; FC625698." evidence="6" ref="1">
    <original>GSPVG</original>
    <variation>EVQWV</variation>
    <location>
        <begin position="126"/>
        <end position="130"/>
    </location>
</feature>
<dbReference type="EC" id="4.2.1.1" evidence="1"/>
<dbReference type="EMBL" id="FC624150">
    <property type="status" value="NOT_ANNOTATED_CDS"/>
    <property type="molecule type" value="mRNA"/>
</dbReference>
<dbReference type="EMBL" id="FC625698">
    <property type="status" value="NOT_ANNOTATED_CDS"/>
    <property type="molecule type" value="mRNA"/>
</dbReference>
<dbReference type="RefSeq" id="XP_009047380.1">
    <property type="nucleotide sequence ID" value="XM_009049132.1"/>
</dbReference>
<dbReference type="SMR" id="B3A0P2"/>
<dbReference type="EnsemblMetazoa" id="LotgiT238082">
    <property type="protein sequence ID" value="LotgiP238082"/>
    <property type="gene ID" value="LotgiG238082"/>
</dbReference>
<dbReference type="GeneID" id="20250653"/>
<dbReference type="KEGG" id="lgi:LOTGIDRAFT_238082"/>
<dbReference type="CTD" id="20250653"/>
<dbReference type="HOGENOM" id="CLU_698865_0_0_1"/>
<dbReference type="OMA" id="TIYANIC"/>
<dbReference type="OrthoDB" id="429145at2759"/>
<dbReference type="GO" id="GO:0005576">
    <property type="term" value="C:extracellular region"/>
    <property type="evidence" value="ECO:0007669"/>
    <property type="project" value="UniProtKB-SubCell"/>
</dbReference>
<dbReference type="GO" id="GO:0004089">
    <property type="term" value="F:carbonate dehydratase activity"/>
    <property type="evidence" value="ECO:0007669"/>
    <property type="project" value="UniProtKB-EC"/>
</dbReference>
<dbReference type="GO" id="GO:0008270">
    <property type="term" value="F:zinc ion binding"/>
    <property type="evidence" value="ECO:0007669"/>
    <property type="project" value="InterPro"/>
</dbReference>
<dbReference type="CDD" id="cd00326">
    <property type="entry name" value="alpha_CA"/>
    <property type="match status" value="1"/>
</dbReference>
<dbReference type="Gene3D" id="3.10.200.10">
    <property type="entry name" value="Alpha carbonic anhydrase"/>
    <property type="match status" value="2"/>
</dbReference>
<dbReference type="InterPro" id="IPR001148">
    <property type="entry name" value="CA_dom"/>
</dbReference>
<dbReference type="InterPro" id="IPR036398">
    <property type="entry name" value="CA_dom_sf"/>
</dbReference>
<dbReference type="InterPro" id="IPR023561">
    <property type="entry name" value="Carbonic_anhydrase_a-class"/>
</dbReference>
<dbReference type="PANTHER" id="PTHR18952">
    <property type="entry name" value="CARBONIC ANHYDRASE"/>
    <property type="match status" value="1"/>
</dbReference>
<dbReference type="PANTHER" id="PTHR18952:SF265">
    <property type="entry name" value="CARBONIC ANHYDRASE"/>
    <property type="match status" value="1"/>
</dbReference>
<dbReference type="Pfam" id="PF00194">
    <property type="entry name" value="Carb_anhydrase"/>
    <property type="match status" value="2"/>
</dbReference>
<dbReference type="SMART" id="SM01057">
    <property type="entry name" value="Carb_anhydrase"/>
    <property type="match status" value="1"/>
</dbReference>
<dbReference type="SUPFAM" id="SSF51069">
    <property type="entry name" value="Carbonic anhydrase"/>
    <property type="match status" value="1"/>
</dbReference>
<dbReference type="PROSITE" id="PS51144">
    <property type="entry name" value="ALPHA_CA_2"/>
    <property type="match status" value="1"/>
</dbReference>
<evidence type="ECO:0000250" key="1">
    <source>
        <dbReference type="UniProtKB" id="P00921"/>
    </source>
</evidence>
<evidence type="ECO:0000255" key="2"/>
<evidence type="ECO:0000255" key="3">
    <source>
        <dbReference type="PROSITE-ProRule" id="PRU01134"/>
    </source>
</evidence>
<evidence type="ECO:0000269" key="4">
    <source>
    </source>
</evidence>
<evidence type="ECO:0000269" key="5">
    <source ref="1"/>
</evidence>
<evidence type="ECO:0000305" key="6"/>
<reference evidence="6" key="1">
    <citation type="submission" date="2007-12" db="EMBL/GenBank/DDBJ databases">
        <title>DOE Joint Genome Institute Lottia gigantea EST project.</title>
        <authorList>
            <person name="Richardson P."/>
            <person name="Lucas S."/>
            <person name="Rokhsar D."/>
            <person name="Wang M."/>
            <person name="Lindquist E.A."/>
        </authorList>
    </citation>
    <scope>NUCLEOTIDE SEQUENCE [LARGE SCALE MRNA]</scope>
    <scope>IDENTIFICATION</scope>
    <source>
        <tissue evidence="5">Mantle</tissue>
    </source>
</reference>
<reference key="2">
    <citation type="journal article" date="2013" name="FEBS J.">
        <title>The shell-forming proteome of Lottia gigantea reveals both deep conservations and lineage-specific novelties.</title>
        <authorList>
            <person name="Marie B."/>
            <person name="Jackson D.J."/>
            <person name="Ramos-Silva P."/>
            <person name="Zanella-Cleon I."/>
            <person name="Guichard N."/>
            <person name="Marin F."/>
        </authorList>
    </citation>
    <scope>PROTEIN SEQUENCE OF 36-47; 54-64; 72-92; 97-145; 148-281; 285-319; 323-365 AND 371-395</scope>
    <scope>SUBCELLULAR LOCATION</scope>
    <scope>TISSUE SPECIFICITY</scope>
    <source>
        <tissue>Shell</tissue>
    </source>
</reference>